<evidence type="ECO:0000255" key="1">
    <source>
        <dbReference type="HAMAP-Rule" id="MF_00391"/>
    </source>
</evidence>
<evidence type="ECO:0000305" key="2"/>
<gene>
    <name evidence="1" type="primary">rpmH</name>
    <name type="ordered locus">DVU_1074</name>
</gene>
<proteinExistence type="inferred from homology"/>
<dbReference type="EMBL" id="AE017285">
    <property type="protein sequence ID" value="AAS95554.1"/>
    <property type="molecule type" value="Genomic_DNA"/>
</dbReference>
<dbReference type="RefSeq" id="WP_010938373.1">
    <property type="nucleotide sequence ID" value="NC_002937.3"/>
</dbReference>
<dbReference type="RefSeq" id="YP_010295.1">
    <property type="nucleotide sequence ID" value="NC_002937.3"/>
</dbReference>
<dbReference type="SMR" id="Q72D55"/>
<dbReference type="STRING" id="882.DVU_1074"/>
<dbReference type="PaxDb" id="882-DVU_1074"/>
<dbReference type="EnsemblBacteria" id="AAS95554">
    <property type="protein sequence ID" value="AAS95554"/>
    <property type="gene ID" value="DVU_1074"/>
</dbReference>
<dbReference type="KEGG" id="dvu:DVU_1074"/>
<dbReference type="PATRIC" id="fig|882.5.peg.1012"/>
<dbReference type="eggNOG" id="COG0230">
    <property type="taxonomic scope" value="Bacteria"/>
</dbReference>
<dbReference type="HOGENOM" id="CLU_129938_2_0_7"/>
<dbReference type="Proteomes" id="UP000002194">
    <property type="component" value="Chromosome"/>
</dbReference>
<dbReference type="GO" id="GO:1990904">
    <property type="term" value="C:ribonucleoprotein complex"/>
    <property type="evidence" value="ECO:0007669"/>
    <property type="project" value="UniProtKB-KW"/>
</dbReference>
<dbReference type="GO" id="GO:0005840">
    <property type="term" value="C:ribosome"/>
    <property type="evidence" value="ECO:0007669"/>
    <property type="project" value="UniProtKB-KW"/>
</dbReference>
<dbReference type="GO" id="GO:0003735">
    <property type="term" value="F:structural constituent of ribosome"/>
    <property type="evidence" value="ECO:0007669"/>
    <property type="project" value="InterPro"/>
</dbReference>
<dbReference type="GO" id="GO:0006412">
    <property type="term" value="P:translation"/>
    <property type="evidence" value="ECO:0007669"/>
    <property type="project" value="UniProtKB-UniRule"/>
</dbReference>
<dbReference type="FunFam" id="1.10.287.3980:FF:000001">
    <property type="entry name" value="Mitochondrial ribosomal protein L34"/>
    <property type="match status" value="1"/>
</dbReference>
<dbReference type="Gene3D" id="1.10.287.3980">
    <property type="match status" value="1"/>
</dbReference>
<dbReference type="HAMAP" id="MF_00391">
    <property type="entry name" value="Ribosomal_bL34"/>
    <property type="match status" value="1"/>
</dbReference>
<dbReference type="InterPro" id="IPR000271">
    <property type="entry name" value="Ribosomal_bL34"/>
</dbReference>
<dbReference type="InterPro" id="IPR020939">
    <property type="entry name" value="Ribosomal_bL34_CS"/>
</dbReference>
<dbReference type="NCBIfam" id="TIGR01030">
    <property type="entry name" value="rpmH_bact"/>
    <property type="match status" value="1"/>
</dbReference>
<dbReference type="PANTHER" id="PTHR14503:SF4">
    <property type="entry name" value="LARGE RIBOSOMAL SUBUNIT PROTEIN BL34M"/>
    <property type="match status" value="1"/>
</dbReference>
<dbReference type="PANTHER" id="PTHR14503">
    <property type="entry name" value="MITOCHONDRIAL RIBOSOMAL PROTEIN 34 FAMILY MEMBER"/>
    <property type="match status" value="1"/>
</dbReference>
<dbReference type="Pfam" id="PF00468">
    <property type="entry name" value="Ribosomal_L34"/>
    <property type="match status" value="1"/>
</dbReference>
<dbReference type="PROSITE" id="PS00784">
    <property type="entry name" value="RIBOSOMAL_L34"/>
    <property type="match status" value="1"/>
</dbReference>
<protein>
    <recommendedName>
        <fullName evidence="1">Large ribosomal subunit protein bL34</fullName>
    </recommendedName>
    <alternativeName>
        <fullName evidence="2">50S ribosomal protein L34</fullName>
    </alternativeName>
</protein>
<reference key="1">
    <citation type="journal article" date="2004" name="Nat. Biotechnol.">
        <title>The genome sequence of the anaerobic, sulfate-reducing bacterium Desulfovibrio vulgaris Hildenborough.</title>
        <authorList>
            <person name="Heidelberg J.F."/>
            <person name="Seshadri R."/>
            <person name="Haveman S.A."/>
            <person name="Hemme C.L."/>
            <person name="Paulsen I.T."/>
            <person name="Kolonay J.F."/>
            <person name="Eisen J.A."/>
            <person name="Ward N.L."/>
            <person name="Methe B.A."/>
            <person name="Brinkac L.M."/>
            <person name="Daugherty S.C."/>
            <person name="DeBoy R.T."/>
            <person name="Dodson R.J."/>
            <person name="Durkin A.S."/>
            <person name="Madupu R."/>
            <person name="Nelson W.C."/>
            <person name="Sullivan S.A."/>
            <person name="Fouts D.E."/>
            <person name="Haft D.H."/>
            <person name="Selengut J."/>
            <person name="Peterson J.D."/>
            <person name="Davidsen T.M."/>
            <person name="Zafar N."/>
            <person name="Zhou L."/>
            <person name="Radune D."/>
            <person name="Dimitrov G."/>
            <person name="Hance M."/>
            <person name="Tran K."/>
            <person name="Khouri H.M."/>
            <person name="Gill J."/>
            <person name="Utterback T.R."/>
            <person name="Feldblyum T.V."/>
            <person name="Wall J.D."/>
            <person name="Voordouw G."/>
            <person name="Fraser C.M."/>
        </authorList>
    </citation>
    <scope>NUCLEOTIDE SEQUENCE [LARGE SCALE GENOMIC DNA]</scope>
    <source>
        <strain>ATCC 29579 / DSM 644 / CCUG 34227 / NCIMB 8303 / VKM B-1760 / Hildenborough</strain>
    </source>
</reference>
<organism>
    <name type="scientific">Nitratidesulfovibrio vulgaris (strain ATCC 29579 / DSM 644 / CCUG 34227 / NCIMB 8303 / VKM B-1760 / Hildenborough)</name>
    <name type="common">Desulfovibrio vulgaris</name>
    <dbReference type="NCBI Taxonomy" id="882"/>
    <lineage>
        <taxon>Bacteria</taxon>
        <taxon>Pseudomonadati</taxon>
        <taxon>Thermodesulfobacteriota</taxon>
        <taxon>Desulfovibrionia</taxon>
        <taxon>Desulfovibrionales</taxon>
        <taxon>Desulfovibrionaceae</taxon>
        <taxon>Nitratidesulfovibrio</taxon>
    </lineage>
</organism>
<accession>Q72D55</accession>
<sequence length="44" mass="5199">MKRTYQPSKIRRKRSLGFRARMATAAGREIIRRRRAKGRKKLAA</sequence>
<keyword id="KW-1185">Reference proteome</keyword>
<keyword id="KW-0687">Ribonucleoprotein</keyword>
<keyword id="KW-0689">Ribosomal protein</keyword>
<name>RL34_NITV2</name>
<feature type="chain" id="PRO_0000187376" description="Large ribosomal subunit protein bL34">
    <location>
        <begin position="1"/>
        <end position="44"/>
    </location>
</feature>
<comment type="similarity">
    <text evidence="1">Belongs to the bacterial ribosomal protein bL34 family.</text>
</comment>